<keyword id="KW-0004">4Fe-4S</keyword>
<keyword id="KW-0249">Electron transport</keyword>
<keyword id="KW-0408">Iron</keyword>
<keyword id="KW-0411">Iron-sulfur</keyword>
<keyword id="KW-0479">Metal-binding</keyword>
<keyword id="KW-0500">Molybdenum</keyword>
<keyword id="KW-0534">Nitrate assimilation</keyword>
<keyword id="KW-0560">Oxidoreductase</keyword>
<keyword id="KW-0574">Periplasm</keyword>
<keyword id="KW-0732">Signal</keyword>
<keyword id="KW-0813">Transport</keyword>
<proteinExistence type="inferred from homology"/>
<reference key="1">
    <citation type="journal article" date="2011" name="J. Bacteriol.">
        <title>Comparative genomics of 28 Salmonella enterica isolates: evidence for CRISPR-mediated adaptive sublineage evolution.</title>
        <authorList>
            <person name="Fricke W.F."/>
            <person name="Mammel M.K."/>
            <person name="McDermott P.F."/>
            <person name="Tartera C."/>
            <person name="White D.G."/>
            <person name="Leclerc J.E."/>
            <person name="Ravel J."/>
            <person name="Cebula T.A."/>
        </authorList>
    </citation>
    <scope>NUCLEOTIDE SEQUENCE [LARGE SCALE GENOMIC DNA]</scope>
    <source>
        <strain>CVM19633</strain>
    </source>
</reference>
<evidence type="ECO:0000255" key="1">
    <source>
        <dbReference type="HAMAP-Rule" id="MF_01630"/>
    </source>
</evidence>
<sequence>MKLSRRSFMKANAVAAAAAAAGLSVPGVARAVVGQQEAIKWDKAPCRFCGTGCGVLVGTQQGRVVACQGDPDAPVNRGLNCIKGYFLPKIMYGKDRLTQPMLRMKDGSYHKDGEFTPVSWEQAFDVMEEKFKTSLKEKGPEAIGMFGSGQWTIWEGYAAAKLFKAGFRSNNIDPNARHCMASAVVGFMRTFGMDEPMGCYDDIEQADAFVLWGSNMAEMHPILWSRITNRRLSDPNVKVAVLSTFQHRSFELADNGIVFTPQSDLVILNYIANYIIQNNAVNQDFFTKHVNLRKGATDIGYGLRPTHPLEKAAKNPGSDASEPMSFDEYKAFVAEYTLDKTAEMTGVPKDQLEQLAQLYADPNKRVISYWTMGFNQHTRGVWANNLVYNLHLLTGKISQPGCGPFSLTGQPSACGTAREVGTFSHRLPADMVVTNEKHRDICEKHWQIPAGTIPAKVGLHAVAQDRALKDGKLNVYWVMCNNNMQAGPNINEDRMPGWRDPRNFIIVSDPYPTVSALSADLILPTAMWVEKEGAYGNAERRTQFWRQQIKAPGEAKSDLWQLVQFSRRFKTEEVWPEALLAQKPELRGKTLYDVLFATPAVSKFPLSELKEEQLNDESRELGFYLQKGLFEEYAWFGRGHGHDLAPFDDYHNARGLRWPVVEGKETQWRYSEGNDPYVKAGEGYKFYGKPDGKAVIFALPFEPAAESPDNEYDLWLSTGRVLEHWHTGSMTRRVPELHRAFPEAVVFIHPLDAKARDLRRGDKVKVSSRRGEVISIVETRGRNRPPQGLVYMPFFDAAQLVNNLTLDATDPLSKETDFKKCAVKLAKV</sequence>
<protein>
    <recommendedName>
        <fullName evidence="1">Periplasmic nitrate reductase</fullName>
        <ecNumber evidence="1">1.9.6.1</ecNumber>
    </recommendedName>
</protein>
<comment type="function">
    <text evidence="1">Catalytic subunit of the periplasmic nitrate reductase complex NapAB. Receives electrons from NapB and catalyzes the reduction of nitrate to nitrite.</text>
</comment>
<comment type="catalytic activity">
    <reaction evidence="1">
        <text>2 Fe(II)-[cytochrome] + nitrate + 2 H(+) = 2 Fe(III)-[cytochrome] + nitrite + H2O</text>
        <dbReference type="Rhea" id="RHEA:12909"/>
        <dbReference type="Rhea" id="RHEA-COMP:11777"/>
        <dbReference type="Rhea" id="RHEA-COMP:11778"/>
        <dbReference type="ChEBI" id="CHEBI:15377"/>
        <dbReference type="ChEBI" id="CHEBI:15378"/>
        <dbReference type="ChEBI" id="CHEBI:16301"/>
        <dbReference type="ChEBI" id="CHEBI:17632"/>
        <dbReference type="ChEBI" id="CHEBI:29033"/>
        <dbReference type="ChEBI" id="CHEBI:29034"/>
        <dbReference type="EC" id="1.9.6.1"/>
    </reaction>
</comment>
<comment type="cofactor">
    <cofactor evidence="1">
        <name>[4Fe-4S] cluster</name>
        <dbReference type="ChEBI" id="CHEBI:49883"/>
    </cofactor>
    <text evidence="1">Binds 1 [4Fe-4S] cluster.</text>
</comment>
<comment type="cofactor">
    <cofactor evidence="1">
        <name>Mo-bis(molybdopterin guanine dinucleotide)</name>
        <dbReference type="ChEBI" id="CHEBI:60539"/>
    </cofactor>
    <text evidence="1">Binds 1 molybdenum-bis(molybdopterin guanine dinucleotide) (Mo-bis-MGD) cofactor per subunit.</text>
</comment>
<comment type="subunit">
    <text evidence="1">Component of the periplasmic nitrate reductase NapAB complex composed of NapA and NapB.</text>
</comment>
<comment type="subcellular location">
    <subcellularLocation>
        <location evidence="1">Periplasm</location>
    </subcellularLocation>
</comment>
<comment type="PTM">
    <text evidence="1">Predicted to be exported by the Tat system. The position of the signal peptide cleavage has not been experimentally proven.</text>
</comment>
<comment type="similarity">
    <text evidence="1">Belongs to the prokaryotic molybdopterin-containing oxidoreductase family. NasA/NapA/NarB subfamily.</text>
</comment>
<gene>
    <name evidence="1" type="primary">napA</name>
    <name type="ordered locus">SeSA_A2485</name>
</gene>
<accession>B4TPE6</accession>
<organism>
    <name type="scientific">Salmonella schwarzengrund (strain CVM19633)</name>
    <dbReference type="NCBI Taxonomy" id="439843"/>
    <lineage>
        <taxon>Bacteria</taxon>
        <taxon>Pseudomonadati</taxon>
        <taxon>Pseudomonadota</taxon>
        <taxon>Gammaproteobacteria</taxon>
        <taxon>Enterobacterales</taxon>
        <taxon>Enterobacteriaceae</taxon>
        <taxon>Salmonella</taxon>
    </lineage>
</organism>
<name>NAPA_SALSV</name>
<feature type="signal peptide" description="Tat-type signal" evidence="1">
    <location>
        <begin position="1"/>
        <end position="31"/>
    </location>
</feature>
<feature type="chain" id="PRO_1000186375" description="Periplasmic nitrate reductase" evidence="1">
    <location>
        <begin position="32"/>
        <end position="828"/>
    </location>
</feature>
<feature type="domain" description="4Fe-4S Mo/W bis-MGD-type" evidence="1">
    <location>
        <begin position="39"/>
        <end position="95"/>
    </location>
</feature>
<feature type="binding site" evidence="1">
    <location>
        <position position="46"/>
    </location>
    <ligand>
        <name>[4Fe-4S] cluster</name>
        <dbReference type="ChEBI" id="CHEBI:49883"/>
    </ligand>
</feature>
<feature type="binding site" evidence="1">
    <location>
        <position position="49"/>
    </location>
    <ligand>
        <name>[4Fe-4S] cluster</name>
        <dbReference type="ChEBI" id="CHEBI:49883"/>
    </ligand>
</feature>
<feature type="binding site" evidence="1">
    <location>
        <position position="53"/>
    </location>
    <ligand>
        <name>[4Fe-4S] cluster</name>
        <dbReference type="ChEBI" id="CHEBI:49883"/>
    </ligand>
</feature>
<feature type="binding site" evidence="1">
    <location>
        <position position="81"/>
    </location>
    <ligand>
        <name>[4Fe-4S] cluster</name>
        <dbReference type="ChEBI" id="CHEBI:49883"/>
    </ligand>
</feature>
<feature type="binding site" evidence="1">
    <location>
        <position position="83"/>
    </location>
    <ligand>
        <name>Mo-bis(molybdopterin guanine dinucleotide)</name>
        <dbReference type="ChEBI" id="CHEBI:60539"/>
    </ligand>
</feature>
<feature type="binding site" evidence="1">
    <location>
        <position position="150"/>
    </location>
    <ligand>
        <name>Mo-bis(molybdopterin guanine dinucleotide)</name>
        <dbReference type="ChEBI" id="CHEBI:60539"/>
    </ligand>
</feature>
<feature type="binding site" evidence="1">
    <location>
        <position position="175"/>
    </location>
    <ligand>
        <name>Mo-bis(molybdopterin guanine dinucleotide)</name>
        <dbReference type="ChEBI" id="CHEBI:60539"/>
    </ligand>
</feature>
<feature type="binding site" evidence="1">
    <location>
        <position position="179"/>
    </location>
    <ligand>
        <name>Mo-bis(molybdopterin guanine dinucleotide)</name>
        <dbReference type="ChEBI" id="CHEBI:60539"/>
    </ligand>
</feature>
<feature type="binding site" evidence="1">
    <location>
        <begin position="212"/>
        <end position="219"/>
    </location>
    <ligand>
        <name>Mo-bis(molybdopterin guanine dinucleotide)</name>
        <dbReference type="ChEBI" id="CHEBI:60539"/>
    </ligand>
</feature>
<feature type="binding site" evidence="1">
    <location>
        <begin position="243"/>
        <end position="247"/>
    </location>
    <ligand>
        <name>Mo-bis(molybdopterin guanine dinucleotide)</name>
        <dbReference type="ChEBI" id="CHEBI:60539"/>
    </ligand>
</feature>
<feature type="binding site" evidence="1">
    <location>
        <begin position="262"/>
        <end position="264"/>
    </location>
    <ligand>
        <name>Mo-bis(molybdopterin guanine dinucleotide)</name>
        <dbReference type="ChEBI" id="CHEBI:60539"/>
    </ligand>
</feature>
<feature type="binding site" evidence="1">
    <location>
        <position position="372"/>
    </location>
    <ligand>
        <name>Mo-bis(molybdopterin guanine dinucleotide)</name>
        <dbReference type="ChEBI" id="CHEBI:60539"/>
    </ligand>
</feature>
<feature type="binding site" evidence="1">
    <location>
        <position position="376"/>
    </location>
    <ligand>
        <name>Mo-bis(molybdopterin guanine dinucleotide)</name>
        <dbReference type="ChEBI" id="CHEBI:60539"/>
    </ligand>
</feature>
<feature type="binding site" evidence="1">
    <location>
        <position position="482"/>
    </location>
    <ligand>
        <name>Mo-bis(molybdopterin guanine dinucleotide)</name>
        <dbReference type="ChEBI" id="CHEBI:60539"/>
    </ligand>
</feature>
<feature type="binding site" evidence="1">
    <location>
        <begin position="508"/>
        <end position="509"/>
    </location>
    <ligand>
        <name>Mo-bis(molybdopterin guanine dinucleotide)</name>
        <dbReference type="ChEBI" id="CHEBI:60539"/>
    </ligand>
</feature>
<feature type="binding site" evidence="1">
    <location>
        <position position="531"/>
    </location>
    <ligand>
        <name>Mo-bis(molybdopterin guanine dinucleotide)</name>
        <dbReference type="ChEBI" id="CHEBI:60539"/>
    </ligand>
</feature>
<feature type="binding site" evidence="1">
    <location>
        <position position="558"/>
    </location>
    <ligand>
        <name>Mo-bis(molybdopterin guanine dinucleotide)</name>
        <dbReference type="ChEBI" id="CHEBI:60539"/>
    </ligand>
</feature>
<feature type="binding site" evidence="1">
    <location>
        <begin position="718"/>
        <end position="727"/>
    </location>
    <ligand>
        <name>Mo-bis(molybdopterin guanine dinucleotide)</name>
        <dbReference type="ChEBI" id="CHEBI:60539"/>
    </ligand>
</feature>
<feature type="binding site" evidence="1">
    <location>
        <position position="794"/>
    </location>
    <ligand>
        <name>substrate</name>
    </ligand>
</feature>
<feature type="binding site" evidence="1">
    <location>
        <position position="802"/>
    </location>
    <ligand>
        <name>Mo-bis(molybdopterin guanine dinucleotide)</name>
        <dbReference type="ChEBI" id="CHEBI:60539"/>
    </ligand>
</feature>
<feature type="binding site" evidence="1">
    <location>
        <position position="819"/>
    </location>
    <ligand>
        <name>Mo-bis(molybdopterin guanine dinucleotide)</name>
        <dbReference type="ChEBI" id="CHEBI:60539"/>
    </ligand>
</feature>
<dbReference type="EC" id="1.9.6.1" evidence="1"/>
<dbReference type="EMBL" id="CP001127">
    <property type="protein sequence ID" value="ACF91092.1"/>
    <property type="molecule type" value="Genomic_DNA"/>
</dbReference>
<dbReference type="RefSeq" id="WP_000778099.1">
    <property type="nucleotide sequence ID" value="NC_011094.1"/>
</dbReference>
<dbReference type="SMR" id="B4TPE6"/>
<dbReference type="KEGG" id="sew:SeSA_A2485"/>
<dbReference type="HOGENOM" id="CLU_000422_13_4_6"/>
<dbReference type="Proteomes" id="UP000001865">
    <property type="component" value="Chromosome"/>
</dbReference>
<dbReference type="GO" id="GO:0016020">
    <property type="term" value="C:membrane"/>
    <property type="evidence" value="ECO:0007669"/>
    <property type="project" value="TreeGrafter"/>
</dbReference>
<dbReference type="GO" id="GO:0009325">
    <property type="term" value="C:nitrate reductase complex"/>
    <property type="evidence" value="ECO:0007669"/>
    <property type="project" value="TreeGrafter"/>
</dbReference>
<dbReference type="GO" id="GO:0042597">
    <property type="term" value="C:periplasmic space"/>
    <property type="evidence" value="ECO:0007669"/>
    <property type="project" value="UniProtKB-SubCell"/>
</dbReference>
<dbReference type="GO" id="GO:0051539">
    <property type="term" value="F:4 iron, 4 sulfur cluster binding"/>
    <property type="evidence" value="ECO:0007669"/>
    <property type="project" value="UniProtKB-KW"/>
</dbReference>
<dbReference type="GO" id="GO:0009055">
    <property type="term" value="F:electron transfer activity"/>
    <property type="evidence" value="ECO:0007669"/>
    <property type="project" value="UniProtKB-UniRule"/>
</dbReference>
<dbReference type="GO" id="GO:0005506">
    <property type="term" value="F:iron ion binding"/>
    <property type="evidence" value="ECO:0007669"/>
    <property type="project" value="UniProtKB-UniRule"/>
</dbReference>
<dbReference type="GO" id="GO:0030151">
    <property type="term" value="F:molybdenum ion binding"/>
    <property type="evidence" value="ECO:0007669"/>
    <property type="project" value="InterPro"/>
</dbReference>
<dbReference type="GO" id="GO:0043546">
    <property type="term" value="F:molybdopterin cofactor binding"/>
    <property type="evidence" value="ECO:0007669"/>
    <property type="project" value="InterPro"/>
</dbReference>
<dbReference type="GO" id="GO:0050140">
    <property type="term" value="F:nitrate reductase (cytochrome) activity"/>
    <property type="evidence" value="ECO:0007669"/>
    <property type="project" value="UniProtKB-EC"/>
</dbReference>
<dbReference type="GO" id="GO:0045333">
    <property type="term" value="P:cellular respiration"/>
    <property type="evidence" value="ECO:0007669"/>
    <property type="project" value="UniProtKB-ARBA"/>
</dbReference>
<dbReference type="GO" id="GO:0006777">
    <property type="term" value="P:Mo-molybdopterin cofactor biosynthetic process"/>
    <property type="evidence" value="ECO:0007669"/>
    <property type="project" value="UniProtKB-UniRule"/>
</dbReference>
<dbReference type="GO" id="GO:0042128">
    <property type="term" value="P:nitrate assimilation"/>
    <property type="evidence" value="ECO:0007669"/>
    <property type="project" value="UniProtKB-UniRule"/>
</dbReference>
<dbReference type="CDD" id="cd02791">
    <property type="entry name" value="MopB_CT_Nitrate-R-NapA-like"/>
    <property type="match status" value="1"/>
</dbReference>
<dbReference type="CDD" id="cd02754">
    <property type="entry name" value="MopB_Nitrate-R-NapA-like"/>
    <property type="match status" value="1"/>
</dbReference>
<dbReference type="FunFam" id="2.40.40.20:FF:000005">
    <property type="entry name" value="Periplasmic nitrate reductase"/>
    <property type="match status" value="1"/>
</dbReference>
<dbReference type="FunFam" id="3.40.228.10:FF:000001">
    <property type="entry name" value="Periplasmic nitrate reductase"/>
    <property type="match status" value="1"/>
</dbReference>
<dbReference type="Gene3D" id="2.40.40.20">
    <property type="match status" value="1"/>
</dbReference>
<dbReference type="Gene3D" id="3.30.200.210">
    <property type="match status" value="1"/>
</dbReference>
<dbReference type="Gene3D" id="3.40.50.740">
    <property type="match status" value="1"/>
</dbReference>
<dbReference type="Gene3D" id="3.40.228.10">
    <property type="entry name" value="Dimethylsulfoxide Reductase, domain 2"/>
    <property type="match status" value="1"/>
</dbReference>
<dbReference type="HAMAP" id="MF_01630">
    <property type="entry name" value="Nitrate_reduct_NapA"/>
    <property type="match status" value="1"/>
</dbReference>
<dbReference type="InterPro" id="IPR009010">
    <property type="entry name" value="Asp_de-COase-like_dom_sf"/>
</dbReference>
<dbReference type="InterPro" id="IPR041957">
    <property type="entry name" value="CT_Nitrate-R-NapA-like"/>
</dbReference>
<dbReference type="InterPro" id="IPR006657">
    <property type="entry name" value="MoPterin_dinucl-bd_dom"/>
</dbReference>
<dbReference type="InterPro" id="IPR006656">
    <property type="entry name" value="Mopterin_OxRdtase"/>
</dbReference>
<dbReference type="InterPro" id="IPR006963">
    <property type="entry name" value="Mopterin_OxRdtase_4Fe-4S_dom"/>
</dbReference>
<dbReference type="InterPro" id="IPR027467">
    <property type="entry name" value="MopterinOxRdtase_cofactor_BS"/>
</dbReference>
<dbReference type="InterPro" id="IPR010051">
    <property type="entry name" value="Periplasm_NO3_reductase_lsu"/>
</dbReference>
<dbReference type="InterPro" id="IPR050123">
    <property type="entry name" value="Prok_molybdopt-oxidoreductase"/>
</dbReference>
<dbReference type="InterPro" id="IPR006311">
    <property type="entry name" value="TAT_signal"/>
</dbReference>
<dbReference type="InterPro" id="IPR019546">
    <property type="entry name" value="TAT_signal_bac_arc"/>
</dbReference>
<dbReference type="NCBIfam" id="TIGR01706">
    <property type="entry name" value="NAPA"/>
    <property type="match status" value="1"/>
</dbReference>
<dbReference type="NCBIfam" id="NF010055">
    <property type="entry name" value="PRK13532.1"/>
    <property type="match status" value="1"/>
</dbReference>
<dbReference type="NCBIfam" id="TIGR01409">
    <property type="entry name" value="TAT_signal_seq"/>
    <property type="match status" value="1"/>
</dbReference>
<dbReference type="PANTHER" id="PTHR43105:SF11">
    <property type="entry name" value="PERIPLASMIC NITRATE REDUCTASE"/>
    <property type="match status" value="1"/>
</dbReference>
<dbReference type="PANTHER" id="PTHR43105">
    <property type="entry name" value="RESPIRATORY NITRATE REDUCTASE"/>
    <property type="match status" value="1"/>
</dbReference>
<dbReference type="Pfam" id="PF04879">
    <property type="entry name" value="Molybdop_Fe4S4"/>
    <property type="match status" value="1"/>
</dbReference>
<dbReference type="Pfam" id="PF00384">
    <property type="entry name" value="Molybdopterin"/>
    <property type="match status" value="1"/>
</dbReference>
<dbReference type="Pfam" id="PF01568">
    <property type="entry name" value="Molydop_binding"/>
    <property type="match status" value="1"/>
</dbReference>
<dbReference type="SMART" id="SM00926">
    <property type="entry name" value="Molybdop_Fe4S4"/>
    <property type="match status" value="1"/>
</dbReference>
<dbReference type="SUPFAM" id="SSF50692">
    <property type="entry name" value="ADC-like"/>
    <property type="match status" value="1"/>
</dbReference>
<dbReference type="SUPFAM" id="SSF53706">
    <property type="entry name" value="Formate dehydrogenase/DMSO reductase, domains 1-3"/>
    <property type="match status" value="1"/>
</dbReference>
<dbReference type="PROSITE" id="PS51669">
    <property type="entry name" value="4FE4S_MOW_BIS_MGD"/>
    <property type="match status" value="1"/>
</dbReference>
<dbReference type="PROSITE" id="PS00551">
    <property type="entry name" value="MOLYBDOPTERIN_PROK_1"/>
    <property type="match status" value="1"/>
</dbReference>
<dbReference type="PROSITE" id="PS51318">
    <property type="entry name" value="TAT"/>
    <property type="match status" value="1"/>
</dbReference>